<organism>
    <name type="scientific">Xenopus laevis</name>
    <name type="common">African clawed frog</name>
    <dbReference type="NCBI Taxonomy" id="8355"/>
    <lineage>
        <taxon>Eukaryota</taxon>
        <taxon>Metazoa</taxon>
        <taxon>Chordata</taxon>
        <taxon>Craniata</taxon>
        <taxon>Vertebrata</taxon>
        <taxon>Euteleostomi</taxon>
        <taxon>Amphibia</taxon>
        <taxon>Batrachia</taxon>
        <taxon>Anura</taxon>
        <taxon>Pipoidea</taxon>
        <taxon>Pipidae</taxon>
        <taxon>Xenopodinae</taxon>
        <taxon>Xenopus</taxon>
        <taxon>Xenopus</taxon>
    </lineage>
</organism>
<sequence>MSDFWHKLGCCVVEKPQPKKKRKRIDRSMIGEPMNFVHLTHIGSGDMGASDGLPKAGTVQEQMRSKCGRDRQWSNSRVL</sequence>
<accession>Q6GPV4</accession>
<gene>
    <name type="primary">cdc42se1-b</name>
</gene>
<proteinExistence type="inferred from homology"/>
<reference key="1">
    <citation type="submission" date="2004-06" db="EMBL/GenBank/DDBJ databases">
        <authorList>
            <consortium name="NIH - Xenopus Gene Collection (XGC) project"/>
        </authorList>
    </citation>
    <scope>NUCLEOTIDE SEQUENCE [LARGE SCALE MRNA]</scope>
    <source>
        <tissue>Embryo</tissue>
    </source>
</reference>
<feature type="chain" id="PRO_0000334636" description="CDC42 small effector protein 1-B">
    <location>
        <begin position="1"/>
        <end position="79"/>
    </location>
</feature>
<feature type="domain" description="CRIB" evidence="2">
    <location>
        <begin position="30"/>
        <end position="43"/>
    </location>
</feature>
<feature type="region of interest" description="Disordered" evidence="3">
    <location>
        <begin position="41"/>
        <end position="79"/>
    </location>
</feature>
<feature type="compositionally biased region" description="Basic and acidic residues" evidence="3">
    <location>
        <begin position="63"/>
        <end position="72"/>
    </location>
</feature>
<feature type="lipid moiety-binding region" description="S-palmitoyl cysteine" evidence="1">
    <location>
        <position position="10"/>
    </location>
</feature>
<feature type="lipid moiety-binding region" description="S-palmitoyl cysteine" evidence="1">
    <location>
        <position position="11"/>
    </location>
</feature>
<protein>
    <recommendedName>
        <fullName>CDC42 small effector protein 1-B</fullName>
    </recommendedName>
</protein>
<name>C4S1B_XENLA</name>
<dbReference type="EMBL" id="BC073003">
    <property type="protein sequence ID" value="AAH73003.1"/>
    <property type="molecule type" value="mRNA"/>
</dbReference>
<dbReference type="RefSeq" id="NP_001085603.1">
    <property type="nucleotide sequence ID" value="NM_001092134.1"/>
</dbReference>
<dbReference type="DNASU" id="444029"/>
<dbReference type="GeneID" id="444029"/>
<dbReference type="KEGG" id="xla:444029"/>
<dbReference type="AGR" id="Xenbase:XB-GENE-6256262"/>
<dbReference type="CTD" id="444029"/>
<dbReference type="Xenbase" id="XB-GENE-6256262">
    <property type="gene designation" value="cdc42se1.L"/>
</dbReference>
<dbReference type="OMA" id="QSIGMSD"/>
<dbReference type="OrthoDB" id="5559822at2759"/>
<dbReference type="Proteomes" id="UP000186698">
    <property type="component" value="Chromosome 8L"/>
</dbReference>
<dbReference type="Bgee" id="444029">
    <property type="expression patterns" value="Expressed in zone of skin and 18 other cell types or tissues"/>
</dbReference>
<dbReference type="GO" id="GO:0005737">
    <property type="term" value="C:cytoplasm"/>
    <property type="evidence" value="ECO:0007669"/>
    <property type="project" value="UniProtKB-KW"/>
</dbReference>
<dbReference type="GO" id="GO:0005856">
    <property type="term" value="C:cytoskeleton"/>
    <property type="evidence" value="ECO:0007669"/>
    <property type="project" value="UniProtKB-SubCell"/>
</dbReference>
<dbReference type="GO" id="GO:0005886">
    <property type="term" value="C:plasma membrane"/>
    <property type="evidence" value="ECO:0000318"/>
    <property type="project" value="GO_Central"/>
</dbReference>
<dbReference type="GO" id="GO:0031267">
    <property type="term" value="F:small GTPase binding"/>
    <property type="evidence" value="ECO:0007669"/>
    <property type="project" value="InterPro"/>
</dbReference>
<dbReference type="GO" id="GO:0008360">
    <property type="term" value="P:regulation of cell shape"/>
    <property type="evidence" value="ECO:0007669"/>
    <property type="project" value="UniProtKB-KW"/>
</dbReference>
<dbReference type="GO" id="GO:0035023">
    <property type="term" value="P:regulation of Rho protein signal transduction"/>
    <property type="evidence" value="ECO:0007669"/>
    <property type="project" value="InterPro"/>
</dbReference>
<dbReference type="FunFam" id="3.90.810.10:FF:000015">
    <property type="entry name" value="CDC42 small effector protein 1"/>
    <property type="match status" value="1"/>
</dbReference>
<dbReference type="Gene3D" id="3.90.810.10">
    <property type="entry name" value="CRIB domain"/>
    <property type="match status" value="1"/>
</dbReference>
<dbReference type="InterPro" id="IPR000095">
    <property type="entry name" value="CRIB_dom"/>
</dbReference>
<dbReference type="InterPro" id="IPR036936">
    <property type="entry name" value="CRIB_dom_sf"/>
</dbReference>
<dbReference type="InterPro" id="IPR039056">
    <property type="entry name" value="SPEC"/>
</dbReference>
<dbReference type="PANTHER" id="PTHR13502:SF3">
    <property type="entry name" value="CDC42 SMALL EFFECTOR PROTEIN 1"/>
    <property type="match status" value="1"/>
</dbReference>
<dbReference type="PANTHER" id="PTHR13502">
    <property type="entry name" value="CDC42 SMALL EFFECTOR PROTEIN HOMOLOG"/>
    <property type="match status" value="1"/>
</dbReference>
<dbReference type="Pfam" id="PF00786">
    <property type="entry name" value="PBD"/>
    <property type="match status" value="1"/>
</dbReference>
<dbReference type="PROSITE" id="PS50108">
    <property type="entry name" value="CRIB"/>
    <property type="match status" value="1"/>
</dbReference>
<evidence type="ECO:0000250" key="1"/>
<evidence type="ECO:0000255" key="2">
    <source>
        <dbReference type="PROSITE-ProRule" id="PRU00057"/>
    </source>
</evidence>
<evidence type="ECO:0000256" key="3">
    <source>
        <dbReference type="SAM" id="MobiDB-lite"/>
    </source>
</evidence>
<evidence type="ECO:0000305" key="4"/>
<keyword id="KW-1003">Cell membrane</keyword>
<keyword id="KW-0133">Cell shape</keyword>
<keyword id="KW-0963">Cytoplasm</keyword>
<keyword id="KW-0206">Cytoskeleton</keyword>
<keyword id="KW-0449">Lipoprotein</keyword>
<keyword id="KW-0472">Membrane</keyword>
<keyword id="KW-0564">Palmitate</keyword>
<keyword id="KW-1185">Reference proteome</keyword>
<comment type="function">
    <text evidence="1">Probably involved in the organization of the actin cytoskeleton by acting downstream of CDC42, inducing actin filament assembly.</text>
</comment>
<comment type="subcellular location">
    <subcellularLocation>
        <location evidence="1">Cytoplasm</location>
        <location evidence="1">Cytoskeleton</location>
    </subcellularLocation>
    <subcellularLocation>
        <location evidence="1">Cell membrane</location>
        <topology evidence="1">Lipid-anchor</topology>
    </subcellularLocation>
</comment>
<comment type="similarity">
    <text evidence="4">Belongs to the CDC42SE/SPEC family.</text>
</comment>